<accession>A8CVF3</accession>
<accession>A8CVF5</accession>
<proteinExistence type="evidence at protein level"/>
<evidence type="ECO:0000255" key="1"/>
<evidence type="ECO:0000256" key="2">
    <source>
        <dbReference type="SAM" id="MobiDB-lite"/>
    </source>
</evidence>
<evidence type="ECO:0000269" key="3">
    <source>
    </source>
</evidence>
<evidence type="ECO:0000303" key="4">
    <source>
    </source>
</evidence>
<evidence type="ECO:0000305" key="5"/>
<evidence type="ECO:0000312" key="6">
    <source>
        <dbReference type="EMBL" id="ABV58321.1"/>
    </source>
</evidence>
<comment type="subcellular location">
    <subcellularLocation>
        <location evidence="3">Cytoplasm</location>
    </subcellularLocation>
    <subcellularLocation>
        <location evidence="3">Nucleus</location>
    </subcellularLocation>
</comment>
<comment type="tissue specificity">
    <text evidence="3">Expressed in roots and leaves.</text>
</comment>
<comment type="induction">
    <text evidence="3">Leaves exhibit a diurnal pattern of expression with up-regulation in the morning, followed by a midday maximum and a 2.5 fold down-regulation in the evening. Expression in leaves is unaffected by salinity or dehydration stress but is induced by mannitol. Mannitol application, salinity and dehydration stress rapidly induce expression in roots.</text>
</comment>
<comment type="PTM">
    <text evidence="3">Phosphorylated in vitro by CK2.</text>
</comment>
<comment type="similarity">
    <text evidence="1">Belongs to the plant dehydrin family.</text>
</comment>
<sequence>MAEYGDQYGRQTDEYGNPIRQTGEFGATGAYGANQQYGTTGTTVGYGTDQCVTTVTTGAQKTDQYGTPGTTGAYGTDQYGTTGTTGEYGTHGGGIAPGATDAGLAGGGGGHRRLGSSGSSSSEDDGQGGRRKKGIKEKIKEKLPGGGHGDDQTHPTPPGSGGYGYEHGGAAESPEHEEKKGIMDKIKEKLPGGHH</sequence>
<protein>
    <recommendedName>
        <fullName evidence="4">Dehydrin DHN1</fullName>
        <shortName evidence="4">AmDHN1</shortName>
    </recommendedName>
</protein>
<reference evidence="5 6" key="1">
    <citation type="journal article" date="2009" name="Plant Physiol. Biochem.">
        <title>A diurnally regulated dehydrin from Avicennia marina that shows nucleo-cytoplasmic localization and is phosphorylated by Casein kinase II in vitro.</title>
        <authorList>
            <person name="Mehta P.A."/>
            <person name="Rebala K.C."/>
            <person name="Venkataraman G."/>
            <person name="Parida A."/>
        </authorList>
    </citation>
    <scope>NUCLEOTIDE SEQUENCE [MRNA]</scope>
    <scope>SUBCELLULAR LOCATION</scope>
    <scope>TISSUE SPECIFICITY</scope>
    <scope>INDUCTION</scope>
    <scope>PHOSPHORYLATION</scope>
</reference>
<feature type="chain" id="PRO_0000396651" description="Dehydrin DHN1">
    <location>
        <begin position="1"/>
        <end position="195"/>
    </location>
</feature>
<feature type="region of interest" description="Disordered" evidence="2">
    <location>
        <begin position="1"/>
        <end position="195"/>
    </location>
</feature>
<feature type="compositionally biased region" description="Low complexity" evidence="2">
    <location>
        <begin position="37"/>
        <end position="48"/>
    </location>
</feature>
<feature type="compositionally biased region" description="Polar residues" evidence="2">
    <location>
        <begin position="50"/>
        <end position="64"/>
    </location>
</feature>
<feature type="compositionally biased region" description="Low complexity" evidence="2">
    <location>
        <begin position="65"/>
        <end position="88"/>
    </location>
</feature>
<feature type="compositionally biased region" description="Basic and acidic residues" evidence="2">
    <location>
        <begin position="136"/>
        <end position="153"/>
    </location>
</feature>
<feature type="compositionally biased region" description="Basic and acidic residues" evidence="2">
    <location>
        <begin position="173"/>
        <end position="195"/>
    </location>
</feature>
<feature type="sequence conflict" description="In Ref. 1; ABV58322." evidence="5" ref="1">
    <original>T</original>
    <variation>A</variation>
    <location>
        <position position="22"/>
    </location>
</feature>
<feature type="sequence conflict" description="In Ref. 1; ABV58322." evidence="5" ref="1">
    <original>V</original>
    <variation>G</variation>
    <location>
        <position position="44"/>
    </location>
</feature>
<name>DHN1_AVIMR</name>
<gene>
    <name evidence="4" type="primary">DHN1</name>
</gene>
<dbReference type="EMBL" id="EU121850">
    <property type="protein sequence ID" value="ABV58321.1"/>
    <property type="molecule type" value="Genomic_DNA"/>
</dbReference>
<dbReference type="EMBL" id="EU121851">
    <property type="protein sequence ID" value="ABV58322.1"/>
    <property type="molecule type" value="mRNA"/>
</dbReference>
<dbReference type="GO" id="GO:0005737">
    <property type="term" value="C:cytoplasm"/>
    <property type="evidence" value="ECO:0000314"/>
    <property type="project" value="UniProtKB"/>
</dbReference>
<dbReference type="GO" id="GO:0005829">
    <property type="term" value="C:cytosol"/>
    <property type="evidence" value="ECO:0007669"/>
    <property type="project" value="TreeGrafter"/>
</dbReference>
<dbReference type="GO" id="GO:0005634">
    <property type="term" value="C:nucleus"/>
    <property type="evidence" value="ECO:0000314"/>
    <property type="project" value="UniProtKB"/>
</dbReference>
<dbReference type="GO" id="GO:0071482">
    <property type="term" value="P:cellular response to light stimulus"/>
    <property type="evidence" value="ECO:0000270"/>
    <property type="project" value="UniProtKB"/>
</dbReference>
<dbReference type="GO" id="GO:0071472">
    <property type="term" value="P:cellular response to salt stress"/>
    <property type="evidence" value="ECO:0000270"/>
    <property type="project" value="UniProtKB"/>
</dbReference>
<dbReference type="GO" id="GO:0042631">
    <property type="term" value="P:cellular response to water deprivation"/>
    <property type="evidence" value="ECO:0000270"/>
    <property type="project" value="UniProtKB"/>
</dbReference>
<dbReference type="GO" id="GO:0009631">
    <property type="term" value="P:cold acclimation"/>
    <property type="evidence" value="ECO:0007669"/>
    <property type="project" value="TreeGrafter"/>
</dbReference>
<dbReference type="GO" id="GO:0009737">
    <property type="term" value="P:response to abscisic acid"/>
    <property type="evidence" value="ECO:0007669"/>
    <property type="project" value="TreeGrafter"/>
</dbReference>
<dbReference type="GO" id="GO:0010555">
    <property type="term" value="P:response to mannitol"/>
    <property type="evidence" value="ECO:0000270"/>
    <property type="project" value="UniProtKB"/>
</dbReference>
<dbReference type="InterPro" id="IPR000167">
    <property type="entry name" value="Dehydrin"/>
</dbReference>
<dbReference type="InterPro" id="IPR030513">
    <property type="entry name" value="Dehydrin_CS"/>
</dbReference>
<dbReference type="PANTHER" id="PTHR33346:SF42">
    <property type="entry name" value="DEHYDRIN XERO 1"/>
    <property type="match status" value="1"/>
</dbReference>
<dbReference type="PANTHER" id="PTHR33346">
    <property type="entry name" value="DEHYDRIN XERO 2-RELATED"/>
    <property type="match status" value="1"/>
</dbReference>
<dbReference type="Pfam" id="PF00257">
    <property type="entry name" value="Dehydrin"/>
    <property type="match status" value="1"/>
</dbReference>
<dbReference type="PROSITE" id="PS00823">
    <property type="entry name" value="DEHYDRIN_2"/>
    <property type="match status" value="2"/>
</dbReference>
<keyword id="KW-0963">Cytoplasm</keyword>
<keyword id="KW-0539">Nucleus</keyword>
<keyword id="KW-0597">Phosphoprotein</keyword>
<keyword id="KW-0346">Stress response</keyword>
<organism>
    <name type="scientific">Avicennia marina</name>
    <name type="common">Grey mangrove</name>
    <name type="synonym">Sceura marina</name>
    <dbReference type="NCBI Taxonomy" id="82927"/>
    <lineage>
        <taxon>Eukaryota</taxon>
        <taxon>Viridiplantae</taxon>
        <taxon>Streptophyta</taxon>
        <taxon>Embryophyta</taxon>
        <taxon>Tracheophyta</taxon>
        <taxon>Spermatophyta</taxon>
        <taxon>Magnoliopsida</taxon>
        <taxon>eudicotyledons</taxon>
        <taxon>Gunneridae</taxon>
        <taxon>Pentapetalae</taxon>
        <taxon>asterids</taxon>
        <taxon>lamiids</taxon>
        <taxon>Lamiales</taxon>
        <taxon>Acanthaceae</taxon>
        <taxon>Avicennioideae</taxon>
        <taxon>Avicennia</taxon>
    </lineage>
</organism>